<dbReference type="EMBL" id="X68550">
    <property type="protein sequence ID" value="CAA48554.1"/>
    <property type="molecule type" value="mRNA"/>
</dbReference>
<dbReference type="EMBL" id="Z15017">
    <property type="protein sequence ID" value="CAA78737.1"/>
    <property type="molecule type" value="mRNA"/>
</dbReference>
<dbReference type="EMBL" id="X67878">
    <property type="protein sequence ID" value="CAA48077.1"/>
    <property type="molecule type" value="mRNA"/>
</dbReference>
<dbReference type="EMBL" id="L07414">
    <property type="protein sequence ID" value="AAA35662.1"/>
    <property type="molecule type" value="mRNA"/>
</dbReference>
<dbReference type="EMBL" id="D31797">
    <property type="protein sequence ID" value="BAA06599.1"/>
    <property type="molecule type" value="Genomic_DNA"/>
</dbReference>
<dbReference type="EMBL" id="BC071754">
    <property type="protein sequence ID" value="AAH71754.1"/>
    <property type="molecule type" value="mRNA"/>
</dbReference>
<dbReference type="EMBL" id="BC074950">
    <property type="protein sequence ID" value="AAH74950.1"/>
    <property type="molecule type" value="mRNA"/>
</dbReference>
<dbReference type="CCDS" id="CCDS14659.1"/>
<dbReference type="PIR" id="S28017">
    <property type="entry name" value="I53476"/>
</dbReference>
<dbReference type="RefSeq" id="NP_000065.1">
    <property type="nucleotide sequence ID" value="NM_000074.3"/>
</dbReference>
<dbReference type="PDB" id="1ALY">
    <property type="method" value="X-ray"/>
    <property type="resolution" value="2.00 A"/>
    <property type="chains" value="A=116-261"/>
</dbReference>
<dbReference type="PDB" id="1I9R">
    <property type="method" value="X-ray"/>
    <property type="resolution" value="3.10 A"/>
    <property type="chains" value="A/B/C=116-261"/>
</dbReference>
<dbReference type="PDB" id="3LKJ">
    <property type="method" value="X-ray"/>
    <property type="resolution" value="2.50 A"/>
    <property type="chains" value="A/B/C=121-261"/>
</dbReference>
<dbReference type="PDB" id="3QD6">
    <property type="method" value="X-ray"/>
    <property type="resolution" value="3.50 A"/>
    <property type="chains" value="A/B/C/D/E/F=116-261"/>
</dbReference>
<dbReference type="PDB" id="6BRB">
    <property type="method" value="X-ray"/>
    <property type="resolution" value="2.82 A"/>
    <property type="chains" value="A=120-261"/>
</dbReference>
<dbReference type="PDB" id="6W9G">
    <property type="method" value="X-ray"/>
    <property type="resolution" value="1.82 A"/>
    <property type="chains" value="A/B/C=116-261"/>
</dbReference>
<dbReference type="PDB" id="7SGM">
    <property type="method" value="X-ray"/>
    <property type="resolution" value="2.00 A"/>
    <property type="chains" value="A/B/C=116-261"/>
</dbReference>
<dbReference type="PDBsum" id="1ALY"/>
<dbReference type="PDBsum" id="1I9R"/>
<dbReference type="PDBsum" id="3LKJ"/>
<dbReference type="PDBsum" id="3QD6"/>
<dbReference type="PDBsum" id="6BRB"/>
<dbReference type="PDBsum" id="6W9G"/>
<dbReference type="PDBsum" id="7SGM"/>
<dbReference type="SMR" id="P29965"/>
<dbReference type="BioGRID" id="107397">
    <property type="interactions" value="11"/>
</dbReference>
<dbReference type="DIP" id="DIP-3013N"/>
<dbReference type="FunCoup" id="P29965">
    <property type="interactions" value="611"/>
</dbReference>
<dbReference type="STRING" id="9606.ENSP00000359663"/>
<dbReference type="BindingDB" id="P29965"/>
<dbReference type="ChEMBL" id="CHEMBL3580491"/>
<dbReference type="DrugBank" id="DB06475">
    <property type="generic name" value="Ruplizumab"/>
</dbReference>
<dbReference type="GlyConnect" id="610">
    <property type="glycosylation" value="12 N-Linked glycans"/>
</dbReference>
<dbReference type="GlyCosmos" id="P29965">
    <property type="glycosylation" value="1 site, 32 glycans"/>
</dbReference>
<dbReference type="GlyGen" id="P29965">
    <property type="glycosylation" value="2 sites, 32 N-linked glycans (2 sites)"/>
</dbReference>
<dbReference type="iPTMnet" id="P29965"/>
<dbReference type="PhosphoSitePlus" id="P29965"/>
<dbReference type="BioMuta" id="CD40LG"/>
<dbReference type="DMDM" id="231718"/>
<dbReference type="MassIVE" id="P29965"/>
<dbReference type="PaxDb" id="9606-ENSP00000359663"/>
<dbReference type="PeptideAtlas" id="P29965"/>
<dbReference type="ProteomicsDB" id="54611"/>
<dbReference type="ABCD" id="P29965">
    <property type="antibodies" value="6 sequenced antibodies"/>
</dbReference>
<dbReference type="Antibodypedia" id="16693">
    <property type="antibodies" value="2138 antibodies from 49 providers"/>
</dbReference>
<dbReference type="DNASU" id="959"/>
<dbReference type="Ensembl" id="ENST00000370629.7">
    <property type="protein sequence ID" value="ENSP00000359663.2"/>
    <property type="gene ID" value="ENSG00000102245.9"/>
</dbReference>
<dbReference type="GeneID" id="959"/>
<dbReference type="KEGG" id="hsa:959"/>
<dbReference type="MANE-Select" id="ENST00000370629.7">
    <property type="protein sequence ID" value="ENSP00000359663.2"/>
    <property type="RefSeq nucleotide sequence ID" value="NM_000074.3"/>
    <property type="RefSeq protein sequence ID" value="NP_000065.1"/>
</dbReference>
<dbReference type="UCSC" id="uc004faa.4">
    <property type="organism name" value="human"/>
</dbReference>
<dbReference type="AGR" id="HGNC:11935"/>
<dbReference type="CTD" id="959"/>
<dbReference type="DisGeNET" id="959"/>
<dbReference type="GeneCards" id="CD40LG"/>
<dbReference type="GeneReviews" id="CD40LG"/>
<dbReference type="HGNC" id="HGNC:11935">
    <property type="gene designation" value="CD40LG"/>
</dbReference>
<dbReference type="HPA" id="ENSG00000102245">
    <property type="expression patterns" value="Group enriched (intestine, lymphoid tissue)"/>
</dbReference>
<dbReference type="MalaCards" id="CD40LG"/>
<dbReference type="MIM" id="300386">
    <property type="type" value="gene"/>
</dbReference>
<dbReference type="MIM" id="308230">
    <property type="type" value="phenotype"/>
</dbReference>
<dbReference type="neXtProt" id="NX_P29965"/>
<dbReference type="OpenTargets" id="ENSG00000102245"/>
<dbReference type="Orphanet" id="101088">
    <property type="disease" value="X-linked hyper-IgM syndrome"/>
</dbReference>
<dbReference type="PharmGKB" id="PA36626"/>
<dbReference type="VEuPathDB" id="HostDB:ENSG00000102245"/>
<dbReference type="eggNOG" id="KOG3656">
    <property type="taxonomic scope" value="Eukaryota"/>
</dbReference>
<dbReference type="GeneTree" id="ENSGT01130000278318"/>
<dbReference type="InParanoid" id="P29965"/>
<dbReference type="OMA" id="VSFCTKA"/>
<dbReference type="OrthoDB" id="8667946at2759"/>
<dbReference type="PAN-GO" id="P29965">
    <property type="GO annotations" value="1 GO annotation based on evolutionary models"/>
</dbReference>
<dbReference type="PhylomeDB" id="P29965"/>
<dbReference type="TreeFam" id="TF332169"/>
<dbReference type="PathwayCommons" id="P29965"/>
<dbReference type="Reactome" id="R-HSA-198933">
    <property type="pathway name" value="Immunoregulatory interactions between a Lymphoid and a non-Lymphoid cell"/>
</dbReference>
<dbReference type="Reactome" id="R-HSA-5668541">
    <property type="pathway name" value="TNFR2 non-canonical NF-kB pathway"/>
</dbReference>
<dbReference type="Reactome" id="R-HSA-5676594">
    <property type="pathway name" value="TNF receptor superfamily (TNFSF) members mediating non-canonical NF-kB pathway"/>
</dbReference>
<dbReference type="SignaLink" id="P29965"/>
<dbReference type="SIGNOR" id="P29965"/>
<dbReference type="BioGRID-ORCS" id="959">
    <property type="hits" value="5 hits in 770 CRISPR screens"/>
</dbReference>
<dbReference type="EvolutionaryTrace" id="P29965"/>
<dbReference type="GeneWiki" id="CD154"/>
<dbReference type="GenomeRNAi" id="959"/>
<dbReference type="Pharos" id="P29965">
    <property type="development level" value="Tbio"/>
</dbReference>
<dbReference type="PRO" id="PR:P29965"/>
<dbReference type="Proteomes" id="UP000005640">
    <property type="component" value="Chromosome X"/>
</dbReference>
<dbReference type="RNAct" id="P29965">
    <property type="molecule type" value="protein"/>
</dbReference>
<dbReference type="Bgee" id="ENSG00000102245">
    <property type="expression patterns" value="Expressed in granulocyte and 90 other cell types or tissues"/>
</dbReference>
<dbReference type="ExpressionAtlas" id="P29965">
    <property type="expression patterns" value="baseline and differential"/>
</dbReference>
<dbReference type="GO" id="GO:0009986">
    <property type="term" value="C:cell surface"/>
    <property type="evidence" value="ECO:0000314"/>
    <property type="project" value="UniProtKB"/>
</dbReference>
<dbReference type="GO" id="GO:0009897">
    <property type="term" value="C:external side of plasma membrane"/>
    <property type="evidence" value="ECO:0007669"/>
    <property type="project" value="Ensembl"/>
</dbReference>
<dbReference type="GO" id="GO:0005615">
    <property type="term" value="C:extracellular space"/>
    <property type="evidence" value="ECO:0000314"/>
    <property type="project" value="UniProt"/>
</dbReference>
<dbReference type="GO" id="GO:0005794">
    <property type="term" value="C:Golgi apparatus"/>
    <property type="evidence" value="ECO:0000314"/>
    <property type="project" value="HPA"/>
</dbReference>
<dbReference type="GO" id="GO:0016020">
    <property type="term" value="C:membrane"/>
    <property type="evidence" value="ECO:0000303"/>
    <property type="project" value="UniProtKB"/>
</dbReference>
<dbReference type="GO" id="GO:0005886">
    <property type="term" value="C:plasma membrane"/>
    <property type="evidence" value="ECO:0000314"/>
    <property type="project" value="HPA"/>
</dbReference>
<dbReference type="GO" id="GO:0005174">
    <property type="term" value="F:CD40 receptor binding"/>
    <property type="evidence" value="ECO:0000315"/>
    <property type="project" value="UniProtKB"/>
</dbReference>
<dbReference type="GO" id="GO:0005125">
    <property type="term" value="F:cytokine activity"/>
    <property type="evidence" value="ECO:0000314"/>
    <property type="project" value="UniProt"/>
</dbReference>
<dbReference type="GO" id="GO:0005178">
    <property type="term" value="F:integrin binding"/>
    <property type="evidence" value="ECO:0000315"/>
    <property type="project" value="UniProtKB"/>
</dbReference>
<dbReference type="GO" id="GO:0043539">
    <property type="term" value="F:protein serine/threonine kinase activator activity"/>
    <property type="evidence" value="ECO:0000314"/>
    <property type="project" value="UniProtKB"/>
</dbReference>
<dbReference type="GO" id="GO:0005164">
    <property type="term" value="F:tumor necrosis factor receptor binding"/>
    <property type="evidence" value="ECO:0007669"/>
    <property type="project" value="InterPro"/>
</dbReference>
<dbReference type="GO" id="GO:0030183">
    <property type="term" value="P:B cell differentiation"/>
    <property type="evidence" value="ECO:0007669"/>
    <property type="project" value="Ensembl"/>
</dbReference>
<dbReference type="GO" id="GO:0042100">
    <property type="term" value="P:B cell proliferation"/>
    <property type="evidence" value="ECO:0000314"/>
    <property type="project" value="UniProtKB"/>
</dbReference>
<dbReference type="GO" id="GO:0023035">
    <property type="term" value="P:CD40 signaling pathway"/>
    <property type="evidence" value="ECO:0000314"/>
    <property type="project" value="UniProt"/>
</dbReference>
<dbReference type="GO" id="GO:0007166">
    <property type="term" value="P:cell surface receptor signaling pathway"/>
    <property type="evidence" value="ECO:0000318"/>
    <property type="project" value="GO_Central"/>
</dbReference>
<dbReference type="GO" id="GO:0006954">
    <property type="term" value="P:inflammatory response"/>
    <property type="evidence" value="ECO:0000314"/>
    <property type="project" value="UniProtKB"/>
</dbReference>
<dbReference type="GO" id="GO:0007229">
    <property type="term" value="P:integrin-mediated signaling pathway"/>
    <property type="evidence" value="ECO:0000315"/>
    <property type="project" value="UniProtKB"/>
</dbReference>
<dbReference type="GO" id="GO:0045190">
    <property type="term" value="P:isotype switching"/>
    <property type="evidence" value="ECO:0000250"/>
    <property type="project" value="UniProtKB"/>
</dbReference>
<dbReference type="GO" id="GO:0007159">
    <property type="term" value="P:leukocyte cell-cell adhesion"/>
    <property type="evidence" value="ECO:0000303"/>
    <property type="project" value="UniProtKB"/>
</dbReference>
<dbReference type="GO" id="GO:0043066">
    <property type="term" value="P:negative regulation of apoptotic process"/>
    <property type="evidence" value="ECO:0000314"/>
    <property type="project" value="UniProtKB"/>
</dbReference>
<dbReference type="GO" id="GO:0030168">
    <property type="term" value="P:platelet activation"/>
    <property type="evidence" value="ECO:0000314"/>
    <property type="project" value="UniProtKB"/>
</dbReference>
<dbReference type="GO" id="GO:0043123">
    <property type="term" value="P:positive regulation of canonical NF-kappaB signal transduction"/>
    <property type="evidence" value="ECO:0000318"/>
    <property type="project" value="GO_Central"/>
</dbReference>
<dbReference type="GO" id="GO:2000353">
    <property type="term" value="P:positive regulation of endothelial cell apoptotic process"/>
    <property type="evidence" value="ECO:0000314"/>
    <property type="project" value="BHF-UCL"/>
</dbReference>
<dbReference type="GO" id="GO:2001238">
    <property type="term" value="P:positive regulation of extrinsic apoptotic signaling pathway"/>
    <property type="evidence" value="ECO:0000318"/>
    <property type="project" value="GO_Central"/>
</dbReference>
<dbReference type="GO" id="GO:0032733">
    <property type="term" value="P:positive regulation of interleukin-10 production"/>
    <property type="evidence" value="ECO:0000314"/>
    <property type="project" value="UniProtKB"/>
</dbReference>
<dbReference type="GO" id="GO:0032735">
    <property type="term" value="P:positive regulation of interleukin-12 production"/>
    <property type="evidence" value="ECO:0000314"/>
    <property type="project" value="UniProtKB"/>
</dbReference>
<dbReference type="GO" id="GO:0032753">
    <property type="term" value="P:positive regulation of interleukin-4 production"/>
    <property type="evidence" value="ECO:0000314"/>
    <property type="project" value="UniProtKB"/>
</dbReference>
<dbReference type="GO" id="GO:0051092">
    <property type="term" value="P:positive regulation of NF-kappaB transcription factor activity"/>
    <property type="evidence" value="ECO:0000314"/>
    <property type="project" value="UniProtKB"/>
</dbReference>
<dbReference type="GO" id="GO:0042102">
    <property type="term" value="P:positive regulation of T cell proliferation"/>
    <property type="evidence" value="ECO:0000314"/>
    <property type="project" value="UniProtKB"/>
</dbReference>
<dbReference type="GO" id="GO:0002637">
    <property type="term" value="P:regulation of immunoglobulin production"/>
    <property type="evidence" value="ECO:0007669"/>
    <property type="project" value="Ensembl"/>
</dbReference>
<dbReference type="GO" id="GO:0031295">
    <property type="term" value="P:T cell costimulation"/>
    <property type="evidence" value="ECO:0000304"/>
    <property type="project" value="UniProtKB"/>
</dbReference>
<dbReference type="CDD" id="cd00184">
    <property type="entry name" value="TNF"/>
    <property type="match status" value="1"/>
</dbReference>
<dbReference type="FunFam" id="2.60.120.40:FF:000013">
    <property type="entry name" value="CD40 ligand"/>
    <property type="match status" value="1"/>
</dbReference>
<dbReference type="Gene3D" id="2.60.120.40">
    <property type="match status" value="1"/>
</dbReference>
<dbReference type="InterPro" id="IPR003263">
    <property type="entry name" value="CD40L"/>
</dbReference>
<dbReference type="InterPro" id="IPR021184">
    <property type="entry name" value="TNF_CS"/>
</dbReference>
<dbReference type="InterPro" id="IPR006052">
    <property type="entry name" value="TNF_dom"/>
</dbReference>
<dbReference type="InterPro" id="IPR008983">
    <property type="entry name" value="Tumour_necrosis_fac-like_dom"/>
</dbReference>
<dbReference type="PANTHER" id="PTHR11471:SF5">
    <property type="entry name" value="CD40 LIGAND"/>
    <property type="match status" value="1"/>
</dbReference>
<dbReference type="PANTHER" id="PTHR11471">
    <property type="entry name" value="TUMOR NECROSIS FACTOR FAMILY MEMBER"/>
    <property type="match status" value="1"/>
</dbReference>
<dbReference type="Pfam" id="PF00229">
    <property type="entry name" value="TNF"/>
    <property type="match status" value="1"/>
</dbReference>
<dbReference type="PIRSF" id="PIRSF016527">
    <property type="entry name" value="TNF_5"/>
    <property type="match status" value="1"/>
</dbReference>
<dbReference type="PRINTS" id="PR01702">
    <property type="entry name" value="CD40LIGAND"/>
</dbReference>
<dbReference type="SMART" id="SM00207">
    <property type="entry name" value="TNF"/>
    <property type="match status" value="1"/>
</dbReference>
<dbReference type="SUPFAM" id="SSF49842">
    <property type="entry name" value="TNF-like"/>
    <property type="match status" value="1"/>
</dbReference>
<dbReference type="PROSITE" id="PS00251">
    <property type="entry name" value="THD_1"/>
    <property type="match status" value="1"/>
</dbReference>
<dbReference type="PROSITE" id="PS50049">
    <property type="entry name" value="THD_2"/>
    <property type="match status" value="1"/>
</dbReference>
<sequence length="261" mass="29274">MIETYNQTSPRSAATGLPISMKIFMYLLTVFLITQMIGSALFAVYLHRRLDKIEDERNLHEDFVFMKTIQRCNTGERSLSLLNCEEIKSQFEGFVKDIMLNKEETKKENSFEMQKGDQNPQIAAHVISEASSKTTSVLQWAEKGYYTMSNNLVTLENGKQLTVKRQGLYYIYAQVTFCSNREASSQAPFIASLCLKSPGRFERILLRAANTHSSAKPCGQQSIHLGGVFELQPGASVFVNVTDPSQVSHGTGFTSFGLLKL</sequence>
<evidence type="ECO:0000250" key="1">
    <source>
        <dbReference type="UniProtKB" id="P27548"/>
    </source>
</evidence>
<evidence type="ECO:0000255" key="2"/>
<evidence type="ECO:0000255" key="3">
    <source>
        <dbReference type="PROSITE-ProRule" id="PRU01387"/>
    </source>
</evidence>
<evidence type="ECO:0000269" key="4">
    <source>
    </source>
</evidence>
<evidence type="ECO:0000269" key="5">
    <source>
    </source>
</evidence>
<evidence type="ECO:0000269" key="6">
    <source>
    </source>
</evidence>
<evidence type="ECO:0000269" key="7">
    <source>
    </source>
</evidence>
<evidence type="ECO:0000269" key="8">
    <source>
    </source>
</evidence>
<evidence type="ECO:0000269" key="9">
    <source>
    </source>
</evidence>
<evidence type="ECO:0000269" key="10">
    <source>
    </source>
</evidence>
<evidence type="ECO:0000269" key="11">
    <source>
    </source>
</evidence>
<evidence type="ECO:0000269" key="12">
    <source>
    </source>
</evidence>
<evidence type="ECO:0000269" key="13">
    <source>
    </source>
</evidence>
<evidence type="ECO:0000269" key="14">
    <source>
    </source>
</evidence>
<evidence type="ECO:0000269" key="15">
    <source>
    </source>
</evidence>
<evidence type="ECO:0000269" key="16">
    <source>
    </source>
</evidence>
<evidence type="ECO:0000269" key="17">
    <source>
    </source>
</evidence>
<evidence type="ECO:0000269" key="18">
    <source>
    </source>
</evidence>
<evidence type="ECO:0000269" key="19">
    <source>
    </source>
</evidence>
<evidence type="ECO:0000269" key="20">
    <source>
    </source>
</evidence>
<evidence type="ECO:0000269" key="21">
    <source>
    </source>
</evidence>
<evidence type="ECO:0000269" key="22">
    <source>
    </source>
</evidence>
<evidence type="ECO:0000269" key="23">
    <source>
    </source>
</evidence>
<evidence type="ECO:0000303" key="24">
    <source>
    </source>
</evidence>
<evidence type="ECO:0000303" key="25">
    <source>
    </source>
</evidence>
<evidence type="ECO:0000305" key="26"/>
<evidence type="ECO:0007829" key="27">
    <source>
        <dbReference type="PDB" id="1ALY"/>
    </source>
</evidence>
<evidence type="ECO:0007829" key="28">
    <source>
        <dbReference type="PDB" id="6BRB"/>
    </source>
</evidence>
<evidence type="ECO:0007829" key="29">
    <source>
        <dbReference type="PDB" id="6W9G"/>
    </source>
</evidence>
<keyword id="KW-0002">3D-structure</keyword>
<keyword id="KW-1003">Cell membrane</keyword>
<keyword id="KW-0202">Cytokine</keyword>
<keyword id="KW-0903">Direct protein sequencing</keyword>
<keyword id="KW-0225">Disease variant</keyword>
<keyword id="KW-1015">Disulfide bond</keyword>
<keyword id="KW-0325">Glycoprotein</keyword>
<keyword id="KW-0472">Membrane</keyword>
<keyword id="KW-1267">Proteomics identification</keyword>
<keyword id="KW-1185">Reference proteome</keyword>
<keyword id="KW-0964">Secreted</keyword>
<keyword id="KW-0735">Signal-anchor</keyword>
<keyword id="KW-0812">Transmembrane</keyword>
<keyword id="KW-1133">Transmembrane helix</keyword>
<organism>
    <name type="scientific">Homo sapiens</name>
    <name type="common">Human</name>
    <dbReference type="NCBI Taxonomy" id="9606"/>
    <lineage>
        <taxon>Eukaryota</taxon>
        <taxon>Metazoa</taxon>
        <taxon>Chordata</taxon>
        <taxon>Craniata</taxon>
        <taxon>Vertebrata</taxon>
        <taxon>Euteleostomi</taxon>
        <taxon>Mammalia</taxon>
        <taxon>Eutheria</taxon>
        <taxon>Euarchontoglires</taxon>
        <taxon>Primates</taxon>
        <taxon>Haplorrhini</taxon>
        <taxon>Catarrhini</taxon>
        <taxon>Hominidae</taxon>
        <taxon>Homo</taxon>
    </lineage>
</organism>
<comment type="function">
    <text evidence="1 5 6 9 19">Cytokine that acts as a ligand to CD40/TNFRSF5 (PubMed:1280226, PubMed:31331973). Costimulates T-cell proliferation and cytokine production (PubMed:8617933). Its cross-linking on T-cells generates a costimulatory signal which enhances the production of IL4 and IL10 in conjunction with the TCR/CD3 ligation and CD28 costimulation (PubMed:8617933). Induces the activation of NF-kappa-B (PubMed:15067037, PubMed:31331973). Induces the activation of kinases MAPK8 and PAK2 in T-cells (PubMed:15067037). Induces tyrosine phosphorylation of isoform 3 of CD28 (PubMed:15067037). Mediates B-cell proliferation in the absence of co-stimulus as well as IgE production in the presence of IL4 (By similarity). Involved in immunoglobulin class switching (By similarity).</text>
</comment>
<comment type="function">
    <molecule>CD40 ligand, soluble form</molecule>
    <text evidence="9">Acts as a ligand for integrins, specifically ITGA5:ITGB1 and ITGAV:ITGB3; both integrins and the CD40 receptor are required for activation of CD40-CD40LG signaling, which have cell-type dependent effects, such as B-cell activation, NF-kappa-B signaling and anti-apoptotic signaling.</text>
</comment>
<comment type="subunit">
    <text evidence="4 6 9 18 20">Homotrimer (PubMed:11676606, PubMed:8589998, PubMed:8626375). Interacts with isoform 3 of CD28 (PubMed:15067037). CD40 ligand, soluble form: Exists as either a monomer or a homotrimer (PubMed:31331973, PubMed:8626375). Forms a ternary complex between CD40 and integrins for CD40-CD40LG signaling (PubMed:31331973).</text>
</comment>
<comment type="subcellular location">
    <subcellularLocation>
        <location evidence="20">Cell membrane</location>
        <topology evidence="25">Single-pass type II membrane protein</topology>
    </subcellularLocation>
    <subcellularLocation>
        <location evidence="6 11">Cell surface</location>
    </subcellularLocation>
</comment>
<comment type="subcellular location">
    <molecule>CD40 ligand, soluble form</molecule>
    <subcellularLocation>
        <location evidence="20">Secreted</location>
    </subcellularLocation>
    <text evidence="7">Release of soluble CD40L from platelets is partially regulated by GP IIb/IIIa, actin polymerization, and a matrix metalloproteinases (MMP) inhibitor-sensitive pathway.</text>
</comment>
<comment type="tissue specificity">
    <text>Specifically expressed on activated CD4+ T-lymphocytes.</text>
</comment>
<comment type="PTM">
    <text evidence="20">The soluble form derives from the membrane form by proteolytic processing.</text>
</comment>
<comment type="PTM">
    <text evidence="4">N-linked glycan is a mixture of high mannose and complex type. Glycan structure does not influence binding affinity to CD40.</text>
</comment>
<comment type="PTM">
    <text>Not O-glycosylated.</text>
</comment>
<comment type="disease" evidence="8 9 10 12 13 14 15 16 17 21 22 23">
    <disease id="DI-02449">
        <name>Immunodeficiency with hyper-IgM, type 1</name>
        <acronym>HIGM1</acronym>
        <description>Immunoglobulin isotype switch defect characterized by elevated concentrations of serum IgM and decreased amounts of all other isotypes. Affected males present at an early age (usually within the first year of life) recurrent bacterial and opportunistic infections, including Pneumocystis carinii pneumonia and intractable diarrhea due to cryptosporidium infection. Despite substitution treatment with intravenous immunoglobulin, the overall prognosis is rather poor, with a death rate of about 10% before adolescence.</description>
        <dbReference type="MIM" id="308230"/>
    </disease>
    <text>The disease is caused by variants affecting the gene represented in this entry.</text>
</comment>
<comment type="similarity">
    <text evidence="26">Belongs to the tumor necrosis factor family.</text>
</comment>
<comment type="online information" name="CD40Lbase">
    <link uri="https://databases.lovd.nl/shared/genes/CD40LG"/>
    <text>CD40L defect database</text>
</comment>
<gene>
    <name type="primary">CD40LG</name>
    <name type="synonym">CD40L</name>
    <name type="synonym">TNFSF5</name>
    <name type="synonym">TRAP</name>
</gene>
<feature type="chain" id="PRO_0000034484" description="CD40 ligand, membrane form">
    <location>
        <begin position="1"/>
        <end position="261"/>
    </location>
</feature>
<feature type="chain" id="PRO_0000034485" description="CD40 ligand, soluble form" evidence="20">
    <location>
        <begin position="113"/>
        <end position="261"/>
    </location>
</feature>
<feature type="topological domain" description="Cytoplasmic" evidence="2">
    <location>
        <begin position="1"/>
        <end position="22"/>
    </location>
</feature>
<feature type="transmembrane region" description="Helical; Signal-anchor for type II membrane protein" evidence="2">
    <location>
        <begin position="23"/>
        <end position="46"/>
    </location>
</feature>
<feature type="topological domain" description="Extracellular" evidence="2">
    <location>
        <begin position="47"/>
        <end position="261"/>
    </location>
</feature>
<feature type="domain" description="THD" evidence="3">
    <location>
        <begin position="122"/>
        <end position="261"/>
    </location>
</feature>
<feature type="site" description="Cleavage">
    <location>
        <begin position="112"/>
        <end position="113"/>
    </location>
</feature>
<feature type="glycosylation site" description="N-linked (GlcNAc...) (complex) asparagine; alternate" evidence="4">
    <location>
        <position position="240"/>
    </location>
</feature>
<feature type="glycosylation site" description="N-linked (GlcNAc...) (high mannose) asparagine; alternate" evidence="4">
    <location>
        <position position="240"/>
    </location>
</feature>
<feature type="disulfide bond" evidence="3">
    <location>
        <begin position="178"/>
        <end position="218"/>
    </location>
</feature>
<feature type="sequence variant" id="VAR_007513" description="In HIGM1; dbSNP:rs104894774." evidence="13 22">
    <original>M</original>
    <variation>R</variation>
    <location>
        <position position="36"/>
    </location>
</feature>
<feature type="sequence variant" id="VAR_017925" description="In HIGM1." evidence="21">
    <original>G</original>
    <variation>R</variation>
    <location>
        <position position="38"/>
    </location>
</feature>
<feature type="sequence variant" id="VAR_017929" description="In HIGM1.">
    <original>G</original>
    <variation>R</variation>
    <location>
        <position position="116"/>
    </location>
</feature>
<feature type="sequence variant" id="VAR_017930" description="In HIGM1." evidence="8 23">
    <original>G</original>
    <variation>S</variation>
    <location>
        <position position="116"/>
    </location>
</feature>
<feature type="sequence variant" id="VAR_007514" description="In HIGM1; dbSNP:rs104894778." evidence="16">
    <original>A</original>
    <variation>E</variation>
    <location>
        <position position="123"/>
    </location>
</feature>
<feature type="sequence variant" id="VAR_017926" description="In HIGM1." evidence="21">
    <original>H</original>
    <variation>R</variation>
    <location>
        <position position="125"/>
    </location>
</feature>
<feature type="sequence variant" id="VAR_007515" description="In HIGM1." evidence="15">
    <original>V</original>
    <variation>A</variation>
    <location>
        <position position="126"/>
    </location>
</feature>
<feature type="sequence variant" id="VAR_017931" description="In HIGM1.">
    <original>V</original>
    <variation>D</variation>
    <location>
        <position position="126"/>
    </location>
</feature>
<feature type="sequence variant" id="VAR_007516" description="In HIGM1." evidence="12">
    <original>SE</original>
    <variation>RG</variation>
    <location>
        <begin position="128"/>
        <end position="129"/>
    </location>
</feature>
<feature type="sequence variant" id="VAR_007517" description="In HIGM1." evidence="22">
    <original>W</original>
    <variation>C</variation>
    <location>
        <position position="140"/>
    </location>
</feature>
<feature type="sequence variant" id="VAR_007518" description="In HIGM1; dbSNP:rs104894777." evidence="13">
    <original>W</original>
    <variation>G</variation>
    <location>
        <position position="140"/>
    </location>
</feature>
<feature type="sequence variant" id="VAR_007519" description="In HIGM1; dbSNP:rs104894777." evidence="15">
    <original>W</original>
    <variation>R</variation>
    <location>
        <position position="140"/>
    </location>
</feature>
<feature type="sequence variant" id="VAR_017932" description="In HIGM1.">
    <original>K</original>
    <variation>T</variation>
    <location>
        <position position="143"/>
    </location>
</feature>
<feature type="sequence variant" id="VAR_007520" description="In HIGM1; dbSNP:rs886039326." evidence="15">
    <original>G</original>
    <variation>E</variation>
    <location>
        <position position="144"/>
    </location>
</feature>
<feature type="sequence variant" id="VAR_017922" description="In HIGM1; dbSNP:rs1057521127." evidence="23">
    <original>T</original>
    <variation>N</variation>
    <location>
        <position position="147"/>
    </location>
</feature>
<feature type="sequence variant" id="VAR_007521" description="In HIGM1; dbSNP:rs104894769." evidence="14 17">
    <original>L</original>
    <variation>P</variation>
    <location>
        <position position="155"/>
    </location>
</feature>
<feature type="sequence variant" id="VAR_017923" description="In HIGM1; decreases ITGA5:ITGB1 and ITGAV:ITGB3 binding of the soluble form; decreases activation of NF-kappa-B signaling; slightly decreases CD40 binding of the soluble form; dbSNP:rs756468554." evidence="9 23">
    <original>Y</original>
    <variation>C</variation>
    <location>
        <position position="170"/>
    </location>
</feature>
<feature type="sequence variant" id="VAR_017933" description="In HIGM1.">
    <original>A</original>
    <variation>D</variation>
    <location>
        <position position="173"/>
    </location>
</feature>
<feature type="sequence variant" id="VAR_017927" description="In HIGM1; decreases ITGA5:ITGB1 and ITGAV:ITGB3 binding of the soluble form; decreases activation of NF-kappa-B signaling." evidence="9 21">
    <original>Q</original>
    <variation>R</variation>
    <location>
        <position position="174"/>
    </location>
</feature>
<feature type="sequence variant" id="VAR_017934" description="In HIGM1; decreases ITGA5:ITGB1 and ITGAV:ITGB3 binding of the soluble form; decreases activation of NF-kappa-B signaling." evidence="9">
    <original>T</original>
    <variation>I</variation>
    <location>
        <position position="176"/>
    </location>
</feature>
<feature type="sequence variant" id="VAR_017935" description="In HIGM1.">
    <original>L</original>
    <variation>P</variation>
    <location>
        <position position="195"/>
    </location>
</feature>
<feature type="sequence variant" id="VAR_017936" description="In HIGM1; decreases ITGA5:ITGB1 and ITGAV:ITGB3 binding of the soluble form; decreases activation of NF-kappa-B signaling." evidence="9">
    <original>A</original>
    <variation>D</variation>
    <location>
        <position position="208"/>
    </location>
</feature>
<feature type="sequence variant" id="VAR_007522" description="In HIGM1; dbSNP:rs1569377829." evidence="14">
    <original>T</original>
    <variation>N</variation>
    <location>
        <position position="211"/>
    </location>
</feature>
<feature type="sequence variant" id="VAR_007523" description="In dbSNP:rs148594123." evidence="17">
    <original>G</original>
    <variation>R</variation>
    <location>
        <position position="219"/>
    </location>
</feature>
<feature type="sequence variant" id="VAR_017937" description="In HIGM1; no effect on ITGA5:ITGB1 and ITGAV:ITGB3 binding of the soluble form; increases NF-kappa-B signaling." evidence="9">
    <original>H</original>
    <variation>Y</variation>
    <location>
        <position position="224"/>
    </location>
</feature>
<feature type="sequence variant" id="VAR_017938" description="In HIGM1; no effect on ITGA5:ITGB1 and ITGAV:ITGB3 binding of the soluble form; slightly increases NF-kappa-B signaling." evidence="9">
    <original>G</original>
    <variation>A</variation>
    <location>
        <position position="226"/>
    </location>
</feature>
<feature type="sequence variant" id="VAR_007524" description="In HIGM1; decreases ITGA5:ITGB1 and ITGAV:ITGB3 binding of the soluble form; decreases activation of NF-kappa-B signaling; dbSNP:rs104894768." evidence="9 14 17 23">
    <original>G</original>
    <variation>V</variation>
    <location>
        <position position="227"/>
    </location>
</feature>
<feature type="sequence variant" id="VAR_007525" description="In HIGM1." evidence="22">
    <location>
        <position position="227"/>
    </location>
</feature>
<feature type="sequence variant" id="VAR_007526" description="In HIGM1." evidence="22 23">
    <original>L</original>
    <variation>S</variation>
    <location>
        <position position="231"/>
    </location>
</feature>
<feature type="sequence variant" id="VAR_007527" description="In HIGM1; dbSNP:rs104894771." evidence="12 23">
    <original>A</original>
    <variation>P</variation>
    <location>
        <position position="235"/>
    </location>
</feature>
<feature type="sequence variant" id="VAR_017939" description="In HIGM1." evidence="10">
    <original>V</original>
    <variation>E</variation>
    <location>
        <position position="237"/>
    </location>
</feature>
<feature type="sequence variant" id="VAR_007528" description="In HIGM1; dbSNP:rs193922136." evidence="22 23">
    <original>T</original>
    <variation>M</variation>
    <location>
        <position position="254"/>
    </location>
</feature>
<feature type="sequence variant" id="VAR_017940" description="In HIGM1; dbSNP:rs1477466218.">
    <original>G</original>
    <variation>D</variation>
    <location>
        <position position="257"/>
    </location>
</feature>
<feature type="sequence variant" id="VAR_017928" description="In HIGM1." evidence="21">
    <original>G</original>
    <variation>S</variation>
    <location>
        <position position="257"/>
    </location>
</feature>
<feature type="sequence variant" id="VAR_017924" description="In HIGM1; decreases ITGA5:ITGB1 and ITGAV:ITGB3 binding of the soluble form; decreases activation of NF-kappa-B signaling; dbSNP:rs1569377884." evidence="9 23">
    <original>L</original>
    <variation>S</variation>
    <location>
        <position position="258"/>
    </location>
</feature>
<feature type="mutagenesis site" description="Decreases ITGA5:ITGB1 binding, B-cell activation, activation of NF-kappa-B signaling, and anti-apoptotic signaling; in soluble form. Slightly decreases CD40 binding; in soluble form." evidence="9">
    <original>Y</original>
    <variation>E</variation>
    <location>
        <position position="170"/>
    </location>
</feature>
<feature type="mutagenesis site" description="Decreases ITGA5:ITGB1 binding, B-cell activation, activation of NF-kappa-B signaling, and anti-apoptotic signaling; when associated with E-226 in soluble form. No effect on CD40 binding; when associated with E-226 in soluble form." evidence="9">
    <original>H</original>
    <variation>E</variation>
    <location>
        <position position="224"/>
    </location>
</feature>
<feature type="mutagenesis site" description="Decreases ITGA5:ITGB1 binding, B-cell activation, activation of NF-kappa-B signaling, and anti-apoptotic signaling; when associated with E-224 in soluble form. No effect on CD40 binding; when associated with E-224 in soluble form." evidence="9">
    <original>G</original>
    <variation>E</variation>
    <location>
        <position position="226"/>
    </location>
</feature>
<feature type="mutagenesis site" description="Decreases ITGA5:ITGB1 binding, B-cell activation, activation of NF-kappa-B signaling, and anti-apoptotic signaling; in soluble form. No effect on CD40 binding; in soluble form." evidence="9">
    <original>G</original>
    <variation>E</variation>
    <location>
        <position position="252"/>
    </location>
</feature>
<feature type="strand" evidence="29">
    <location>
        <begin position="123"/>
        <end position="129"/>
    </location>
</feature>
<feature type="strand" evidence="27">
    <location>
        <begin position="132"/>
        <end position="134"/>
    </location>
</feature>
<feature type="strand" evidence="28">
    <location>
        <begin position="135"/>
        <end position="137"/>
    </location>
</feature>
<feature type="strand" evidence="29">
    <location>
        <begin position="139"/>
        <end position="142"/>
    </location>
</feature>
<feature type="strand" evidence="29">
    <location>
        <begin position="153"/>
        <end position="156"/>
    </location>
</feature>
<feature type="turn" evidence="29">
    <location>
        <begin position="157"/>
        <end position="159"/>
    </location>
</feature>
<feature type="strand" evidence="29">
    <location>
        <begin position="160"/>
        <end position="165"/>
    </location>
</feature>
<feature type="strand" evidence="29">
    <location>
        <begin position="167"/>
        <end position="179"/>
    </location>
</feature>
<feature type="turn" evidence="27">
    <location>
        <begin position="181"/>
        <end position="183"/>
    </location>
</feature>
<feature type="strand" evidence="29">
    <location>
        <begin position="189"/>
        <end position="196"/>
    </location>
</feature>
<feature type="strand" evidence="29">
    <location>
        <begin position="203"/>
        <end position="210"/>
    </location>
</feature>
<feature type="strand" evidence="29">
    <location>
        <begin position="219"/>
        <end position="231"/>
    </location>
</feature>
<feature type="strand" evidence="29">
    <location>
        <begin position="236"/>
        <end position="242"/>
    </location>
</feature>
<feature type="helix" evidence="29">
    <location>
        <begin position="244"/>
        <end position="246"/>
    </location>
</feature>
<feature type="strand" evidence="29">
    <location>
        <begin position="253"/>
        <end position="260"/>
    </location>
</feature>
<proteinExistence type="evidence at protein level"/>
<reference key="1">
    <citation type="journal article" date="1992" name="Eur. J. Immunol.">
        <title>Cloning of TRAP, a ligand for CD40 on human T cells.</title>
        <authorList>
            <person name="Graf D."/>
            <person name="Korthaeuer U."/>
            <person name="Mages H.W."/>
            <person name="Senger G."/>
            <person name="Kroczek R.A."/>
        </authorList>
    </citation>
    <scope>NUCLEOTIDE SEQUENCE [MRNA]</scope>
    <scope>FUNCTION</scope>
</reference>
<reference key="2">
    <citation type="journal article" date="1992" name="EMBO J.">
        <title>The human T cell antigen gp39, a member of the TNF gene family, is a ligand for the CD40 receptor: expression of a soluble form of gp39 with B cell co-stimulatory activity.</title>
        <authorList>
            <person name="Hollenbaugh D."/>
            <person name="Grosmaire L.S."/>
            <person name="Kullas C.D."/>
            <person name="Chalupny J.N."/>
            <person name="Braesch-Andersen S."/>
            <person name="Noelle R.J."/>
            <person name="Stamenkovic I."/>
            <person name="Ledbetter J.A."/>
            <person name="Aruffo A."/>
        </authorList>
    </citation>
    <scope>NUCLEOTIDE SEQUENCE [MRNA]</scope>
</reference>
<reference key="3">
    <citation type="journal article" date="1993" name="Cell">
        <title>The CD40 ligand, gp39, is defective in activated T cells from patients with X-linked hyper-IgM syndrome.</title>
        <authorList>
            <person name="Aruffo A."/>
            <person name="Farrington M."/>
            <person name="Hollenbaugh D."/>
            <person name="Li X."/>
            <person name="Milatovich A."/>
            <person name="Nonoyama S."/>
            <person name="Bajorath J."/>
            <person name="Grosmaire L.S."/>
            <person name="Stenkamp R."/>
            <person name="Neubauer M."/>
            <person name="Roberts R.L."/>
            <person name="Noelle R.J."/>
            <person name="Ledbetter J.A."/>
            <person name="Francke U."/>
            <person name="Ochs H.D."/>
        </authorList>
    </citation>
    <scope>NUCLEOTIDE SEQUENCE [MRNA]</scope>
    <scope>VARIANTS HIGM1 128-SER-GLU-129 DELINS ARG-GLY AND PRO-235</scope>
</reference>
<reference key="4">
    <citation type="journal article" date="1992" name="J. Exp. Med.">
        <title>Recombinant human CD40 ligand stimulates B cell proliferation and immunoglobulin E secretion.</title>
        <authorList>
            <person name="Spriggs M.K."/>
            <person name="Armitage R.J."/>
            <person name="Strockbine L."/>
            <person name="Clifford K.N."/>
            <person name="Macduff B.M."/>
            <person name="Sato T.A."/>
            <person name="Maliszewski C.R."/>
            <person name="Fanslow W.C."/>
        </authorList>
    </citation>
    <scope>NUCLEOTIDE SEQUENCE [MRNA]</scope>
</reference>
<reference key="5">
    <citation type="journal article" date="1993" name="FEBS Lett.">
        <title>Human CD40-ligand: molecular cloning, cellular distribution and regulation of expression by factors controlling IgE production.</title>
        <authorList>
            <person name="Gauchat J.-F."/>
            <person name="Aubry J.-P."/>
            <person name="Mazzei G.J."/>
            <person name="Life P."/>
            <person name="Jomotte T."/>
            <person name="Elson G."/>
            <person name="Bonnefoy J.-Y."/>
        </authorList>
    </citation>
    <scope>NUCLEOTIDE SEQUENCE [MRNA]</scope>
    <scope>SUBCELLULAR LOCATION</scope>
</reference>
<reference key="6">
    <citation type="journal article" date="1995" name="Biochim. Biophys. Acta">
        <title>Structural organization of the gene for CD40 ligand: molecular analysis for diagnosis of X-linked hyper-IgM syndrome.</title>
        <authorList>
            <person name="Shimadzu M."/>
            <person name="Nunoi H."/>
            <person name="Terasaki H."/>
            <person name="Ninomiya R."/>
            <person name="Iwata M."/>
            <person name="Kanegasaka S."/>
            <person name="Matsuda I."/>
        </authorList>
    </citation>
    <scope>NUCLEOTIDE SEQUENCE [GENOMIC DNA]</scope>
</reference>
<reference key="7">
    <citation type="journal article" date="2004" name="Genome Res.">
        <title>The status, quality, and expansion of the NIH full-length cDNA project: the Mammalian Gene Collection (MGC).</title>
        <authorList>
            <consortium name="The MGC Project Team"/>
        </authorList>
    </citation>
    <scope>NUCLEOTIDE SEQUENCE [LARGE SCALE MRNA]</scope>
    <source>
        <tissue>Blood</tissue>
    </source>
</reference>
<reference key="8">
    <citation type="journal article" date="1996" name="J. Biol. Chem.">
        <title>Human native soluble CD40L is a biologically active trimer, processed inside microsomes.</title>
        <authorList>
            <person name="Pietravalle F."/>
            <person name="Lecoanet-Henchoz S."/>
            <person name="Blasey H."/>
            <person name="Aubry J.-P."/>
            <person name="Elson G."/>
            <person name="Edgerton M.D."/>
            <person name="Bonnefoy J.-Y."/>
            <person name="Gauchat J.-F."/>
        </authorList>
    </citation>
    <scope>PROTEIN SEQUENCE OF 113-117</scope>
    <scope>PROTEOLYTIC PROCESSING</scope>
    <scope>SUBUNIT</scope>
    <scope>SUBCELLULAR LOCATION</scope>
</reference>
<reference key="9">
    <citation type="journal article" date="1996" name="J. Immunol.">
        <title>Cross-linking of the CD40 ligand on human CD4+ T lymphocytes generates a costimulatory signal that up-regulates IL-4 synthesis.</title>
        <authorList>
            <person name="Blotta M.H."/>
            <person name="Marshall J.D."/>
            <person name="DeKruyff R.H."/>
            <person name="Umetsu D.T."/>
        </authorList>
    </citation>
    <scope>FUNCTION</scope>
</reference>
<reference key="10">
    <citation type="journal article" date="2001" name="Protein Expr. Purif.">
        <title>Determination of carbohydrate structures N-linked to soluble CD154 and characterization of the interactions of CD40 with CD154 expressed in Pichia pastoris and Chinese hamster ovary cells.</title>
        <authorList>
            <person name="Khandekar S.S."/>
            <person name="Silverman C."/>
            <person name="Wells-Marani J."/>
            <person name="Bacon A.M."/>
            <person name="Birrell H."/>
            <person name="Brigham-Burke M."/>
            <person name="DeMarini D.J."/>
            <person name="Jonak Z.L."/>
            <person name="Camilleri P."/>
            <person name="Fishman-Lobell J."/>
        </authorList>
    </citation>
    <scope>GLYCOSYLATION AT ASN-240</scope>
    <scope>STRUCTURE OF CARBOHYDRATE ON ASN-240</scope>
    <scope>IDENTIFICATION BY MASS SPECTROMETRY</scope>
    <scope>SUBUNIT</scope>
</reference>
<reference key="11">
    <citation type="journal article" date="2004" name="J. Am. Coll. Cardiol.">
        <title>Release of soluble CD40L from platelets is regulated by glycoprotein IIb/IIIa and actin polymerization.</title>
        <authorList>
            <person name="Furman M.I."/>
            <person name="Krueger L.A."/>
            <person name="Linden M.D."/>
            <person name="Barnard M.R."/>
            <person name="Frelinger A.L. III"/>
            <person name="Michelson A.D."/>
        </authorList>
    </citation>
    <scope>FUNCTION</scope>
</reference>
<reference key="12">
    <citation type="journal article" date="2004" name="J. Exp. Med.">
        <title>The modulation of CD40 ligand signaling by transmembrane CD28 splice variant in human T cells.</title>
        <authorList>
            <person name="Mikolajczak S.A."/>
            <person name="Ma B.Y."/>
            <person name="Yoshida T."/>
            <person name="Yoshida R."/>
            <person name="Kelvin D.J."/>
            <person name="Ochi A."/>
        </authorList>
    </citation>
    <scope>FUNCTION</scope>
    <scope>SUBCELLULAR LOCATION</scope>
</reference>
<reference key="13">
    <citation type="journal article" date="2019" name="J. Immunol.">
        <title>Integrin Binding to the Trimeric Interface of CD40L Plays a Critical Role in CD40/CD40L Signaling.</title>
        <authorList>
            <person name="Takada Y.K."/>
            <person name="Yu J."/>
            <person name="Shimoda M."/>
            <person name="Takada Y."/>
        </authorList>
    </citation>
    <scope>FUNCTION AS CD40 AND INTEGRIN LIGAND</scope>
    <scope>CHARACTERIZATION OF VARIANTS HIGM1 CYS-170; ARG-174; ILE-176; ASP-208; TYR-224; ALA-226; VAL-227 AND SER-258</scope>
    <scope>MUTAGENESIS OF TYR-170; HIS-224; GLY-226 AND GLY-252</scope>
</reference>
<reference key="14">
    <citation type="journal article" date="1995" name="Structure">
        <title>2-A crystal structure of an extracellular fragment of human CD40 ligand.</title>
        <authorList>
            <person name="Karpsusas M."/>
            <person name="Hsu Y.-M."/>
            <person name="Wang J.-H."/>
            <person name="Thompson J."/>
            <person name="Lederman S."/>
            <person name="Chess L."/>
            <person name="Thomas D."/>
        </authorList>
    </citation>
    <scope>X-RAY CRYSTALLOGRAPHY (2.0 ANGSTROMS) OF 116-261</scope>
    <scope>SUBUNIT</scope>
</reference>
<reference key="15">
    <citation type="journal article" date="1998" name="Protein Sci.">
        <title>The role of polar interactions in the molecular recognition of CD40L with its receptor CD40.</title>
        <authorList>
            <person name="Singh J."/>
            <person name="Garber E."/>
            <person name="van Vlijmen H."/>
            <person name="Karpsusas M."/>
            <person name="Hsu Y.-M."/>
            <person name="Zheng Z."/>
            <person name="Naismith J.H."/>
            <person name="Thomas D."/>
        </authorList>
    </citation>
    <scope>3D-STRUCTURE MODELING OF COMPLEX WITH CD40</scope>
</reference>
<reference key="16">
    <citation type="journal article" date="1993" name="Nature">
        <title>Defective expression of T-cell CD40 ligand causes X-linked immunodeficiency with hyper-IgM.</title>
        <authorList>
            <person name="Korthaeuer U."/>
            <person name="Graf D."/>
            <person name="Mages H.W."/>
            <person name="Briere F."/>
            <person name="Padayachee M."/>
            <person name="Malcolm S."/>
            <person name="Ugazio A.G."/>
            <person name="Notarangelo L.D."/>
            <person name="Levinsky R.J."/>
            <person name="Kroczek R.A."/>
        </authorList>
    </citation>
    <scope>VARIANTS HIGM1 ARG-36 AND GLY-140</scope>
</reference>
<reference key="17">
    <citation type="journal article" date="1993" name="Nature">
        <title>CD40 ligand mutations in X-linked immunodeficiency with hyper-IgM.</title>
        <authorList>
            <person name="Disanto J.P."/>
            <person name="Bonnefoy J.-Y."/>
            <person name="Gauchat J.-F."/>
            <person name="Fischer A."/>
            <person name="de Saint Basile G."/>
        </authorList>
    </citation>
    <scope>VARIANT HIGM1 GLU-123</scope>
</reference>
<reference key="18">
    <citation type="journal article" date="1993" name="Science">
        <title>CD40 ligand gene defects responsible for X-linked hyper-IgM syndrome.</title>
        <authorList>
            <person name="Allen R.C."/>
            <person name="Armitage R.J."/>
            <person name="Conley M.E."/>
            <person name="Rosenblatt H."/>
            <person name="Jenkins N.A."/>
            <person name="Copeland N.G."/>
            <person name="Bedell M.A."/>
            <person name="Edelhoff S."/>
            <person name="Disteche C.M."/>
            <person name="Simoneaux D.K."/>
            <person name="Fanslow W.C."/>
            <person name="Belmont J.W."/>
            <person name="Spriggs M.K."/>
        </authorList>
    </citation>
    <scope>VARIANTS HIGM1 PRO-155; ASN-211 AND VAL-227</scope>
</reference>
<reference key="19">
    <citation type="journal article" date="1995" name="Am. J. Hum. Genet.">
        <title>Characterization of nine novel mutations in the CD40 ligand gene in patients with X-linked hyper IgM syndrome of various ancestry.</title>
        <authorList>
            <person name="Macchi P."/>
            <person name="Villa A."/>
            <person name="Strina D."/>
            <person name="Sacco M.G."/>
            <person name="Morali F."/>
            <person name="Brugnoni D."/>
            <person name="Giliani S."/>
            <person name="Mantuano E."/>
            <person name="Fasth A."/>
            <person name="Andersson B."/>
            <person name="Zegers B.J.M."/>
            <person name="Cavagni G."/>
            <person name="Reznick I."/>
            <person name="Levy J."/>
            <person name="Zan-Bar I."/>
            <person name="Porat Y."/>
            <person name="Airo P."/>
            <person name="Plebani A."/>
            <person name="Vezzoni P."/>
            <person name="Notarangelo L.D."/>
        </authorList>
    </citation>
    <scope>VARIANTS HIGM1 ALA-126; ARG-140 AND GLU-144</scope>
</reference>
<reference key="20">
    <citation type="journal article" date="1995" name="J. Clin. Invest.">
        <title>Signaling through CD40 rescues IgE but not IgG or IgA secretion in X-linked immunodeficiency with hyper-IgM.</title>
        <authorList>
            <person name="Saiki O."/>
            <person name="Tanaka T."/>
            <person name="Wada Y."/>
            <person name="Uda H."/>
            <person name="Inoue A."/>
            <person name="Katada Y."/>
            <person name="Izeki M."/>
            <person name="Iwata M."/>
            <person name="Nunoi H."/>
            <person name="Matsuda I."/>
        </authorList>
    </citation>
    <scope>VARIANT HIGM1 GLU-237</scope>
</reference>
<reference key="21">
    <citation type="journal article" date="1996" name="Hum. Mutat.">
        <title>Mutation analysis in CD40 ligand deficiency leading to X-linked hypogammaglobulinemia with hyper IgM syndrome.</title>
        <authorList>
            <person name="Katz F."/>
            <person name="Hinshelwood S."/>
            <person name="Rutland P."/>
            <person name="Jones A."/>
            <person name="Kinnon C."/>
            <person name="Morgan G."/>
        </authorList>
    </citation>
    <scope>VARIANTS HIGM1 ARG-38; ARG-125; ARG-174 AND SER-257</scope>
</reference>
<reference key="22">
    <citation type="journal article" date="1996" name="J. Clin. Invest.">
        <title>A single strand conformation polymorphism study of CD40 ligand. Efficient mutation analysis and carrier detection for X-linked hyper IgM syndrome.</title>
        <authorList>
            <person name="Lin Q."/>
            <person name="Rohrer J."/>
            <person name="Allen R.C."/>
            <person name="Larche M."/>
            <person name="Greene J.M."/>
            <person name="Shigeoka A.O."/>
            <person name="Gatti R.A."/>
            <person name="Derauf D.C."/>
            <person name="Belmont J.W."/>
            <person name="Conley M.E."/>
        </authorList>
    </citation>
    <scope>VARIANTS HIGM1 PRO-155 AND VAL-227</scope>
    <scope>VARIANT ARG-219</scope>
</reference>
<reference key="23">
    <citation type="journal article" date="1997" name="Hum. Genet.">
        <title>Mutations of the CD40 ligand gene in 13 Japanese patients with X-linked hyper-IgM syndrome.</title>
        <authorList>
            <person name="Nonoyama S."/>
            <person name="Shimadzu M."/>
            <person name="Toru H."/>
            <person name="Seyama K."/>
            <person name="Nunoi H."/>
            <person name="Neubauer M."/>
            <person name="Yata J."/>
            <person name="Och H.D."/>
        </authorList>
    </citation>
    <scope>VARIANTS HIGM1 ARG-36; CYS-140; GLY-227 DEL; SER-231 AND MET-254</scope>
</reference>
<reference key="24">
    <citation type="journal article" date="1998" name="Blood">
        <title>Mutations of the CD40 ligand gene and its effect on CD40 ligand expression in patients with X-linked hyper IgM syndrome.</title>
        <authorList>
            <person name="Seyama K."/>
            <person name="Nonoyama S."/>
            <person name="Gangsaas I."/>
            <person name="Hollenbaugh D."/>
            <person name="Pabst H.F."/>
            <person name="Aruffo A."/>
            <person name="Ochs H.D."/>
        </authorList>
    </citation>
    <scope>VARIANTS HIGM1 SER-116; ASN-147; CYS-170; VAL-227; SER-231; PRO-235; MET-254 AND SER-258</scope>
</reference>
<reference key="25">
    <citation type="journal article" date="2016" name="Immunogenetics">
        <title>Novel and recurrent AID mutations underlie prevalent autosomal recessive form of HIGM in consanguineous patients.</title>
        <authorList>
            <person name="Ouadani H."/>
            <person name="Ben-Mustapha I."/>
            <person name="Ben-ali M."/>
            <person name="Ben-khemis L."/>
            <person name="Largueche B."/>
            <person name="Boussoffara R."/>
            <person name="Maalej S."/>
            <person name="Fetni I."/>
            <person name="Hassayoun S."/>
            <person name="Mahfoudh A."/>
            <person name="Mellouli F."/>
            <person name="Yalaoui S."/>
            <person name="Masmoudi H."/>
            <person name="Bejaoui M."/>
            <person name="Barbouche M.R."/>
        </authorList>
    </citation>
    <scope>VARIANT HIGM1 SER-116</scope>
</reference>
<name>CD40L_HUMAN</name>
<protein>
    <recommendedName>
        <fullName>CD40 ligand</fullName>
        <shortName>CD40-L</shortName>
    </recommendedName>
    <alternativeName>
        <fullName>T-cell antigen Gp39</fullName>
    </alternativeName>
    <alternativeName>
        <fullName>TNF-related activation protein</fullName>
        <shortName>TRAP</shortName>
    </alternativeName>
    <alternativeName>
        <fullName>Tumor necrosis factor ligand superfamily member 5</fullName>
    </alternativeName>
    <cdAntigenName>CD154</cdAntigenName>
    <component>
        <recommendedName>
            <fullName>CD40 ligand, membrane form</fullName>
        </recommendedName>
    </component>
    <component>
        <recommendedName>
            <fullName evidence="25">CD40 ligand, soluble form</fullName>
            <shortName evidence="24">sCD40L</shortName>
        </recommendedName>
    </component>
</protein>
<accession>P29965</accession>